<gene>
    <name evidence="1" type="primary">groEL</name>
    <name evidence="1" type="synonym">groL</name>
    <name type="synonym">mopA</name>
    <name type="ordered locus">Erum6420</name>
    <name type="ordered locus">ERWE_CDS_06730</name>
</gene>
<evidence type="ECO:0000255" key="1">
    <source>
        <dbReference type="HAMAP-Rule" id="MF_00600"/>
    </source>
</evidence>
<evidence type="ECO:0000305" key="2"/>
<feature type="chain" id="PRO_0000063365" description="Chaperonin GroEL">
    <location>
        <begin position="1"/>
        <end position="551"/>
    </location>
</feature>
<feature type="binding site" evidence="1">
    <location>
        <begin position="29"/>
        <end position="32"/>
    </location>
    <ligand>
        <name>ATP</name>
        <dbReference type="ChEBI" id="CHEBI:30616"/>
    </ligand>
</feature>
<feature type="binding site" evidence="1">
    <location>
        <position position="50"/>
    </location>
    <ligand>
        <name>ATP</name>
        <dbReference type="ChEBI" id="CHEBI:30616"/>
    </ligand>
</feature>
<feature type="binding site" evidence="1">
    <location>
        <begin position="86"/>
        <end position="90"/>
    </location>
    <ligand>
        <name>ATP</name>
        <dbReference type="ChEBI" id="CHEBI:30616"/>
    </ligand>
</feature>
<feature type="binding site" evidence="1">
    <location>
        <position position="417"/>
    </location>
    <ligand>
        <name>ATP</name>
        <dbReference type="ChEBI" id="CHEBI:30616"/>
    </ligand>
</feature>
<feature type="binding site" evidence="1">
    <location>
        <position position="499"/>
    </location>
    <ligand>
        <name>ATP</name>
        <dbReference type="ChEBI" id="CHEBI:30616"/>
    </ligand>
</feature>
<feature type="sequence conflict" description="In Ref. 1; AAA93153." evidence="2" ref="1">
    <original>M</original>
    <variation>T</variation>
    <location>
        <position position="487"/>
    </location>
</feature>
<proteinExistence type="inferred from homology"/>
<accession>P48213</accession>
<accession>Q5FDA8</accession>
<accession>Q5HAN8</accession>
<keyword id="KW-0067">ATP-binding</keyword>
<keyword id="KW-0143">Chaperone</keyword>
<keyword id="KW-0963">Cytoplasm</keyword>
<keyword id="KW-0413">Isomerase</keyword>
<keyword id="KW-0547">Nucleotide-binding</keyword>
<name>CH60_EHRRW</name>
<sequence>MANMVVTGEQLDKSIREVVRILEDAVGCTAGPKGLTVAISKPYGAPEVTKDGYKVMKSIKPEDPLALAIANIIAQSASQCNDKVGDGTTTCSILTAKVIEEVSKVKAAGADIICVREGVLKAKEAVLEALKCMKREVLSEEEIAQVATISANGDKNIGTKIAQCVKEVGKDGVITVEESKGFKELDVEKTDGMQFDRGYLSPYFVTNSEKMLVEFENPYILLTEKKLNIIQPLLPILENIARSGRPLLIIAEDVEGEALSTLVLNKLRGGLHVAAVKAPGFGDRRKDMLGDIAILTGAKHVINDELAIKMEDLTLCDLGTAKNIRITKDTTTIIGSVDNSCAHVQSRICQIRMQIDNSTSDYDKEKLQERLAKLSGGVAVLKVGGSSEVEVKERKDRVEDALHATRAAVEEGVVPGGGAALLYTLSALDNLKSKNDDEQLGINIVKRALQAPIKRIIKNAGSENAPCVIAHLLKQNDKELIFNVDVMNFANAFTSGVIDPLKVVRIAFDFAVSLAAVFMTLNAIVVDIPSKDDNSAAGGAGMGGMGGMGGF</sequence>
<organism>
    <name type="scientific">Ehrlichia ruminantium (strain Welgevonden)</name>
    <dbReference type="NCBI Taxonomy" id="254945"/>
    <lineage>
        <taxon>Bacteria</taxon>
        <taxon>Pseudomonadati</taxon>
        <taxon>Pseudomonadota</taxon>
        <taxon>Alphaproteobacteria</taxon>
        <taxon>Rickettsiales</taxon>
        <taxon>Anaplasmataceae</taxon>
        <taxon>Ehrlichia</taxon>
    </lineage>
</organism>
<comment type="function">
    <text evidence="1">Together with its co-chaperonin GroES, plays an essential role in assisting protein folding. The GroEL-GroES system forms a nano-cage that allows encapsulation of the non-native substrate proteins and provides a physical environment optimized to promote and accelerate protein folding.</text>
</comment>
<comment type="catalytic activity">
    <reaction evidence="1">
        <text>ATP + H2O + a folded polypeptide = ADP + phosphate + an unfolded polypeptide.</text>
        <dbReference type="EC" id="5.6.1.7"/>
    </reaction>
</comment>
<comment type="subunit">
    <text evidence="1">Forms a cylinder of 14 subunits composed of two heptameric rings stacked back-to-back. Interacts with the co-chaperonin GroES.</text>
</comment>
<comment type="subcellular location">
    <subcellularLocation>
        <location evidence="1">Cytoplasm</location>
    </subcellularLocation>
</comment>
<comment type="similarity">
    <text evidence="1">Belongs to the chaperonin (HSP60) family.</text>
</comment>
<reference key="1">
    <citation type="journal article" date="1995" name="Microbiology">
        <title>The Cowdria ruminantium groE operon.</title>
        <authorList>
            <person name="Lally N.C."/>
            <person name="Nicoll S."/>
            <person name="Paxton E.A."/>
            <person name="Cary C.M."/>
            <person name="Sumption K.J."/>
        </authorList>
    </citation>
    <scope>NUCLEOTIDE SEQUENCE [GENOMIC DNA]</scope>
</reference>
<reference key="2">
    <citation type="journal article" date="2005" name="Proc. Natl. Acad. Sci. U.S.A.">
        <title>The genome of the heartwater agent Ehrlichia ruminantium contains multiple tandem repeats of actively variable copy number.</title>
        <authorList>
            <person name="Collins N.E."/>
            <person name="Liebenberg J."/>
            <person name="de Villiers E.P."/>
            <person name="Brayton K.A."/>
            <person name="Louw E."/>
            <person name="Pretorius A."/>
            <person name="Faber F.E."/>
            <person name="van Heerden H."/>
            <person name="Josemans A."/>
            <person name="van Kleef M."/>
            <person name="Steyn H.C."/>
            <person name="van Strijp M.F."/>
            <person name="Zweygarth E."/>
            <person name="Jongejan F."/>
            <person name="Maillard J.C."/>
            <person name="Berthier D."/>
            <person name="Botha M."/>
            <person name="Joubert F."/>
            <person name="Corton C.H."/>
            <person name="Thomson N.R."/>
            <person name="Allsopp M.T."/>
            <person name="Allsopp B.A."/>
        </authorList>
    </citation>
    <scope>NUCLEOTIDE SEQUENCE [LARGE SCALE GENOMIC DNA]</scope>
    <source>
        <strain>Welgevonden</strain>
    </source>
</reference>
<reference key="3">
    <citation type="journal article" date="2006" name="J. Bacteriol.">
        <title>Comparative genomic analysis of three strains of Ehrlichia ruminantium reveals an active process of genome size plasticity.</title>
        <authorList>
            <person name="Frutos R."/>
            <person name="Viari A."/>
            <person name="Ferraz C."/>
            <person name="Morgat A."/>
            <person name="Eychenie S."/>
            <person name="Kandassamy Y."/>
            <person name="Chantal I."/>
            <person name="Bensaid A."/>
            <person name="Coissac E."/>
            <person name="Vachiery N."/>
            <person name="Demaille J."/>
            <person name="Martinez D."/>
        </authorList>
    </citation>
    <scope>NUCLEOTIDE SEQUENCE [LARGE SCALE GENOMIC DNA]</scope>
    <source>
        <strain>Welgevonden</strain>
    </source>
</reference>
<protein>
    <recommendedName>
        <fullName evidence="1">Chaperonin GroEL</fullName>
        <ecNumber evidence="1">5.6.1.7</ecNumber>
    </recommendedName>
    <alternativeName>
        <fullName evidence="1">60 kDa chaperonin</fullName>
    </alternativeName>
    <alternativeName>
        <fullName evidence="1">Chaperonin-60</fullName>
        <shortName evidence="1">Cpn60</shortName>
    </alternativeName>
</protein>
<dbReference type="EC" id="5.6.1.7" evidence="1"/>
<dbReference type="EMBL" id="U13638">
    <property type="protein sequence ID" value="AAA93153.1"/>
    <property type="molecule type" value="Genomic_DNA"/>
</dbReference>
<dbReference type="EMBL" id="CR767821">
    <property type="protein sequence ID" value="CAH58374.1"/>
    <property type="molecule type" value="Genomic_DNA"/>
</dbReference>
<dbReference type="EMBL" id="CR925678">
    <property type="protein sequence ID" value="CAI27167.1"/>
    <property type="molecule type" value="Genomic_DNA"/>
</dbReference>
<dbReference type="RefSeq" id="WP_011155322.1">
    <property type="nucleotide sequence ID" value="NC_005295.2"/>
</dbReference>
<dbReference type="SMR" id="P48213"/>
<dbReference type="GeneID" id="33057703"/>
<dbReference type="KEGG" id="eru:Erum6420"/>
<dbReference type="KEGG" id="erw:ERWE_CDS_06730"/>
<dbReference type="eggNOG" id="COG0459">
    <property type="taxonomic scope" value="Bacteria"/>
</dbReference>
<dbReference type="HOGENOM" id="CLU_016503_3_0_5"/>
<dbReference type="Proteomes" id="UP000001021">
    <property type="component" value="Chromosome"/>
</dbReference>
<dbReference type="GO" id="GO:0005737">
    <property type="term" value="C:cytoplasm"/>
    <property type="evidence" value="ECO:0007669"/>
    <property type="project" value="UniProtKB-SubCell"/>
</dbReference>
<dbReference type="GO" id="GO:0005524">
    <property type="term" value="F:ATP binding"/>
    <property type="evidence" value="ECO:0007669"/>
    <property type="project" value="UniProtKB-UniRule"/>
</dbReference>
<dbReference type="GO" id="GO:0140662">
    <property type="term" value="F:ATP-dependent protein folding chaperone"/>
    <property type="evidence" value="ECO:0007669"/>
    <property type="project" value="InterPro"/>
</dbReference>
<dbReference type="GO" id="GO:0016853">
    <property type="term" value="F:isomerase activity"/>
    <property type="evidence" value="ECO:0007669"/>
    <property type="project" value="UniProtKB-KW"/>
</dbReference>
<dbReference type="GO" id="GO:0051082">
    <property type="term" value="F:unfolded protein binding"/>
    <property type="evidence" value="ECO:0007669"/>
    <property type="project" value="UniProtKB-UniRule"/>
</dbReference>
<dbReference type="GO" id="GO:0042026">
    <property type="term" value="P:protein refolding"/>
    <property type="evidence" value="ECO:0007669"/>
    <property type="project" value="UniProtKB-UniRule"/>
</dbReference>
<dbReference type="CDD" id="cd03344">
    <property type="entry name" value="GroEL"/>
    <property type="match status" value="1"/>
</dbReference>
<dbReference type="FunFam" id="3.50.7.10:FF:000001">
    <property type="entry name" value="60 kDa chaperonin"/>
    <property type="match status" value="1"/>
</dbReference>
<dbReference type="Gene3D" id="3.50.7.10">
    <property type="entry name" value="GroEL"/>
    <property type="match status" value="1"/>
</dbReference>
<dbReference type="Gene3D" id="1.10.560.10">
    <property type="entry name" value="GroEL-like equatorial domain"/>
    <property type="match status" value="1"/>
</dbReference>
<dbReference type="Gene3D" id="3.30.260.10">
    <property type="entry name" value="TCP-1-like chaperonin intermediate domain"/>
    <property type="match status" value="1"/>
</dbReference>
<dbReference type="HAMAP" id="MF_00600">
    <property type="entry name" value="CH60"/>
    <property type="match status" value="1"/>
</dbReference>
<dbReference type="InterPro" id="IPR018370">
    <property type="entry name" value="Chaperonin_Cpn60_CS"/>
</dbReference>
<dbReference type="InterPro" id="IPR001844">
    <property type="entry name" value="Cpn60/GroEL"/>
</dbReference>
<dbReference type="InterPro" id="IPR002423">
    <property type="entry name" value="Cpn60/GroEL/TCP-1"/>
</dbReference>
<dbReference type="InterPro" id="IPR027409">
    <property type="entry name" value="GroEL-like_apical_dom_sf"/>
</dbReference>
<dbReference type="InterPro" id="IPR027413">
    <property type="entry name" value="GROEL-like_equatorial_sf"/>
</dbReference>
<dbReference type="InterPro" id="IPR027410">
    <property type="entry name" value="TCP-1-like_intermed_sf"/>
</dbReference>
<dbReference type="NCBIfam" id="TIGR02348">
    <property type="entry name" value="GroEL"/>
    <property type="match status" value="1"/>
</dbReference>
<dbReference type="NCBIfam" id="NF000592">
    <property type="entry name" value="PRK00013.1"/>
    <property type="match status" value="1"/>
</dbReference>
<dbReference type="NCBIfam" id="NF009487">
    <property type="entry name" value="PRK12849.1"/>
    <property type="match status" value="1"/>
</dbReference>
<dbReference type="NCBIfam" id="NF009488">
    <property type="entry name" value="PRK12850.1"/>
    <property type="match status" value="1"/>
</dbReference>
<dbReference type="NCBIfam" id="NF009489">
    <property type="entry name" value="PRK12851.1"/>
    <property type="match status" value="1"/>
</dbReference>
<dbReference type="PANTHER" id="PTHR45633">
    <property type="entry name" value="60 KDA HEAT SHOCK PROTEIN, MITOCHONDRIAL"/>
    <property type="match status" value="1"/>
</dbReference>
<dbReference type="Pfam" id="PF00118">
    <property type="entry name" value="Cpn60_TCP1"/>
    <property type="match status" value="1"/>
</dbReference>
<dbReference type="PRINTS" id="PR00298">
    <property type="entry name" value="CHAPERONIN60"/>
</dbReference>
<dbReference type="SUPFAM" id="SSF52029">
    <property type="entry name" value="GroEL apical domain-like"/>
    <property type="match status" value="1"/>
</dbReference>
<dbReference type="SUPFAM" id="SSF48592">
    <property type="entry name" value="GroEL equatorial domain-like"/>
    <property type="match status" value="1"/>
</dbReference>
<dbReference type="SUPFAM" id="SSF54849">
    <property type="entry name" value="GroEL-intermediate domain like"/>
    <property type="match status" value="1"/>
</dbReference>
<dbReference type="PROSITE" id="PS00296">
    <property type="entry name" value="CHAPERONINS_CPN60"/>
    <property type="match status" value="1"/>
</dbReference>